<evidence type="ECO:0000250" key="1"/>
<evidence type="ECO:0000305" key="2"/>
<dbReference type="EC" id="2.3.1.47"/>
<dbReference type="EMBL" id="CP001321">
    <property type="protein sequence ID" value="ACL33115.1"/>
    <property type="molecule type" value="Genomic_DNA"/>
</dbReference>
<dbReference type="RefSeq" id="WP_005710988.1">
    <property type="nucleotide sequence ID" value="NC_011852.1"/>
</dbReference>
<dbReference type="SMR" id="B8F713"/>
<dbReference type="STRING" id="557723.HAPS_1561"/>
<dbReference type="KEGG" id="hap:HAPS_1561"/>
<dbReference type="HOGENOM" id="CLU_015846_11_2_6"/>
<dbReference type="UniPathway" id="UPA00078"/>
<dbReference type="Proteomes" id="UP000006743">
    <property type="component" value="Chromosome"/>
</dbReference>
<dbReference type="GO" id="GO:0008710">
    <property type="term" value="F:8-amino-7-oxononanoate synthase activity"/>
    <property type="evidence" value="ECO:0007669"/>
    <property type="project" value="UniProtKB-EC"/>
</dbReference>
<dbReference type="GO" id="GO:0030170">
    <property type="term" value="F:pyridoxal phosphate binding"/>
    <property type="evidence" value="ECO:0007669"/>
    <property type="project" value="InterPro"/>
</dbReference>
<dbReference type="GO" id="GO:0009102">
    <property type="term" value="P:biotin biosynthetic process"/>
    <property type="evidence" value="ECO:0007669"/>
    <property type="project" value="UniProtKB-UniPathway"/>
</dbReference>
<dbReference type="CDD" id="cd06454">
    <property type="entry name" value="KBL_like"/>
    <property type="match status" value="1"/>
</dbReference>
<dbReference type="Gene3D" id="3.90.1150.10">
    <property type="entry name" value="Aspartate Aminotransferase, domain 1"/>
    <property type="match status" value="1"/>
</dbReference>
<dbReference type="Gene3D" id="3.40.640.10">
    <property type="entry name" value="Type I PLP-dependent aspartate aminotransferase-like (Major domain)"/>
    <property type="match status" value="1"/>
</dbReference>
<dbReference type="InterPro" id="IPR001917">
    <property type="entry name" value="Aminotrans_II_pyridoxalP_BS"/>
</dbReference>
<dbReference type="InterPro" id="IPR004839">
    <property type="entry name" value="Aminotransferase_I/II_large"/>
</dbReference>
<dbReference type="InterPro" id="IPR050087">
    <property type="entry name" value="AON_synthase_class-II"/>
</dbReference>
<dbReference type="InterPro" id="IPR004723">
    <property type="entry name" value="AONS_Archaea/Proteobacteria"/>
</dbReference>
<dbReference type="InterPro" id="IPR015424">
    <property type="entry name" value="PyrdxlP-dep_Trfase"/>
</dbReference>
<dbReference type="InterPro" id="IPR015421">
    <property type="entry name" value="PyrdxlP-dep_Trfase_major"/>
</dbReference>
<dbReference type="InterPro" id="IPR015422">
    <property type="entry name" value="PyrdxlP-dep_Trfase_small"/>
</dbReference>
<dbReference type="NCBIfam" id="TIGR00858">
    <property type="entry name" value="bioF"/>
    <property type="match status" value="1"/>
</dbReference>
<dbReference type="PANTHER" id="PTHR13693:SF100">
    <property type="entry name" value="8-AMINO-7-OXONONANOATE SYNTHASE"/>
    <property type="match status" value="1"/>
</dbReference>
<dbReference type="PANTHER" id="PTHR13693">
    <property type="entry name" value="CLASS II AMINOTRANSFERASE/8-AMINO-7-OXONONANOATE SYNTHASE"/>
    <property type="match status" value="1"/>
</dbReference>
<dbReference type="Pfam" id="PF00155">
    <property type="entry name" value="Aminotran_1_2"/>
    <property type="match status" value="1"/>
</dbReference>
<dbReference type="SUPFAM" id="SSF53383">
    <property type="entry name" value="PLP-dependent transferases"/>
    <property type="match status" value="1"/>
</dbReference>
<dbReference type="PROSITE" id="PS00599">
    <property type="entry name" value="AA_TRANSFER_CLASS_2"/>
    <property type="match status" value="1"/>
</dbReference>
<feature type="chain" id="PRO_0000381007" description="Putative 8-amino-7-oxononanoate synthase">
    <location>
        <begin position="1"/>
        <end position="380"/>
    </location>
</feature>
<feature type="binding site" evidence="1">
    <location>
        <position position="18"/>
    </location>
    <ligand>
        <name>substrate</name>
    </ligand>
</feature>
<feature type="binding site" evidence="1">
    <location>
        <begin position="105"/>
        <end position="106"/>
    </location>
    <ligand>
        <name>pyridoxal 5'-phosphate</name>
        <dbReference type="ChEBI" id="CHEBI:597326"/>
    </ligand>
</feature>
<feature type="binding site" evidence="1">
    <location>
        <position position="130"/>
    </location>
    <ligand>
        <name>substrate</name>
    </ligand>
</feature>
<feature type="binding site" evidence="1">
    <location>
        <position position="178"/>
    </location>
    <ligand>
        <name>pyridoxal 5'-phosphate</name>
        <dbReference type="ChEBI" id="CHEBI:597326"/>
    </ligand>
</feature>
<feature type="binding site" evidence="1">
    <location>
        <begin position="204"/>
        <end position="207"/>
    </location>
    <ligand>
        <name>pyridoxal 5'-phosphate</name>
        <dbReference type="ChEBI" id="CHEBI:597326"/>
    </ligand>
</feature>
<feature type="binding site" evidence="1">
    <location>
        <begin position="235"/>
        <end position="238"/>
    </location>
    <ligand>
        <name>pyridoxal 5'-phosphate</name>
        <dbReference type="ChEBI" id="CHEBI:597326"/>
    </ligand>
</feature>
<feature type="binding site" evidence="1">
    <location>
        <position position="352"/>
    </location>
    <ligand>
        <name>substrate</name>
    </ligand>
</feature>
<feature type="modified residue" description="N6-(pyridoxal phosphate)lysine" evidence="1">
    <location>
        <position position="238"/>
    </location>
</feature>
<name>BIOF_GLAP5</name>
<sequence>MNKFTQHLQQLAEIGQKRQLPDIEHQGKFVIARDLTMLNLSSNDYLGLANDAQQVERFLQSIGKNQPLTSSSSRLLTGNFPIYQDFETLLAQRFQRESALLFNSGYHANIGILPAVADKQTLILADKLAHASLIDGIRLSGADFFRYKHNDYLHLEQLLQTHSERYQQVIIVTESVFSMDGDIADLQQLVALKKRYTNVLLYVDEAHAIGVYGQQGLGMAEVFDCIQEIDFLVGTFGKALASMGAYLVCDSEIREYLINTMRPLIFSTALPPINVAWTYFLFEQLPQFTEKRHHLEKLSQILRTEVTKRSEFPLLSETCIVPYILGENQQAVEKADYLQKQGYYCLPIRPPTVPKGTARLRFSLTADLTEQDIMGLISCL</sequence>
<gene>
    <name type="primary">bioF</name>
    <name type="ordered locus">HAPS_1561</name>
</gene>
<accession>B8F713</accession>
<keyword id="KW-0093">Biotin biosynthesis</keyword>
<keyword id="KW-0663">Pyridoxal phosphate</keyword>
<keyword id="KW-1185">Reference proteome</keyword>
<keyword id="KW-0808">Transferase</keyword>
<protein>
    <recommendedName>
        <fullName>Putative 8-amino-7-oxononanoate synthase</fullName>
        <shortName>AONS</shortName>
        <ecNumber>2.3.1.47</ecNumber>
    </recommendedName>
    <alternativeName>
        <fullName>7-keto-8-amino-pelargonic acid synthase</fullName>
        <shortName>7-KAP synthase</shortName>
    </alternativeName>
    <alternativeName>
        <fullName>8-amino-7-ketopelargonate synthase</fullName>
    </alternativeName>
</protein>
<comment type="function">
    <text evidence="1">Catalyzes the decarboxylative condensation of pimeloyl-[acyl-carrier protein] and L-alanine to produce 8-amino-7-oxononanoate (AON), [acyl-carrier protein], and carbon dioxide.</text>
</comment>
<comment type="catalytic activity">
    <reaction>
        <text>6-carboxyhexanoyl-[ACP] + L-alanine + H(+) = (8S)-8-amino-7-oxononanoate + holo-[ACP] + CO2</text>
        <dbReference type="Rhea" id="RHEA:42288"/>
        <dbReference type="Rhea" id="RHEA-COMP:9685"/>
        <dbReference type="Rhea" id="RHEA-COMP:9955"/>
        <dbReference type="ChEBI" id="CHEBI:15378"/>
        <dbReference type="ChEBI" id="CHEBI:16526"/>
        <dbReference type="ChEBI" id="CHEBI:57972"/>
        <dbReference type="ChEBI" id="CHEBI:64479"/>
        <dbReference type="ChEBI" id="CHEBI:78846"/>
        <dbReference type="ChEBI" id="CHEBI:149468"/>
        <dbReference type="EC" id="2.3.1.47"/>
    </reaction>
</comment>
<comment type="cofactor">
    <cofactor evidence="1">
        <name>pyridoxal 5'-phosphate</name>
        <dbReference type="ChEBI" id="CHEBI:597326"/>
    </cofactor>
</comment>
<comment type="pathway">
    <text>Cofactor biosynthesis; biotin biosynthesis.</text>
</comment>
<comment type="subunit">
    <text evidence="1">Homodimer.</text>
</comment>
<comment type="similarity">
    <text evidence="2">Belongs to the class-II pyridoxal-phosphate-dependent aminotransferase family. BioF subfamily.</text>
</comment>
<reference key="1">
    <citation type="journal article" date="2009" name="J. Bacteriol.">
        <title>Complete genome sequence of Haemophilus parasuis SH0165.</title>
        <authorList>
            <person name="Yue M."/>
            <person name="Yang F."/>
            <person name="Yang J."/>
            <person name="Bei W."/>
            <person name="Cai X."/>
            <person name="Chen L."/>
            <person name="Dong J."/>
            <person name="Zhou R."/>
            <person name="Jin M."/>
            <person name="Jin Q."/>
            <person name="Chen H."/>
        </authorList>
    </citation>
    <scope>NUCLEOTIDE SEQUENCE [LARGE SCALE GENOMIC DNA]</scope>
    <source>
        <strain>SH0165</strain>
    </source>
</reference>
<proteinExistence type="inferred from homology"/>
<organism>
    <name type="scientific">Glaesserella parasuis serovar 5 (strain SH0165)</name>
    <name type="common">Haemophilus parasuis</name>
    <dbReference type="NCBI Taxonomy" id="557723"/>
    <lineage>
        <taxon>Bacteria</taxon>
        <taxon>Pseudomonadati</taxon>
        <taxon>Pseudomonadota</taxon>
        <taxon>Gammaproteobacteria</taxon>
        <taxon>Pasteurellales</taxon>
        <taxon>Pasteurellaceae</taxon>
        <taxon>Glaesserella</taxon>
    </lineage>
</organism>